<keyword id="KW-0349">Heme</keyword>
<keyword id="KW-0408">Iron</keyword>
<keyword id="KW-0443">Lipid metabolism</keyword>
<keyword id="KW-0456">Lyase</keyword>
<keyword id="KW-0472">Membrane</keyword>
<keyword id="KW-0479">Metal-binding</keyword>
<keyword id="KW-0503">Monooxygenase</keyword>
<keyword id="KW-0560">Oxidoreductase</keyword>
<keyword id="KW-0755">Steroidogenesis</keyword>
<comment type="function">
    <text>Conversion of pregnenolone and progesterone to their 17-alpha-hydroxylated products and subsequently to dehydroepiandrosterone (DHEA) and androstenedione. Catalyzes both the 17-alpha-hydroxylation and the 17,20-lyase reaction.</text>
</comment>
<comment type="catalytic activity">
    <reaction evidence="2">
        <text>a C21-steroid + reduced [NADPH--hemoprotein reductase] + O2 = a 17alpha-hydroxy-C21-steroid + oxidized [NADPH--hemoprotein reductase] + H2O + H(+)</text>
        <dbReference type="Rhea" id="RHEA:65760"/>
        <dbReference type="Rhea" id="RHEA-COMP:11964"/>
        <dbReference type="Rhea" id="RHEA-COMP:11965"/>
        <dbReference type="ChEBI" id="CHEBI:15377"/>
        <dbReference type="ChEBI" id="CHEBI:15378"/>
        <dbReference type="ChEBI" id="CHEBI:15379"/>
        <dbReference type="ChEBI" id="CHEBI:57618"/>
        <dbReference type="ChEBI" id="CHEBI:58210"/>
        <dbReference type="ChEBI" id="CHEBI:61313"/>
        <dbReference type="ChEBI" id="CHEBI:138141"/>
        <dbReference type="EC" id="1.14.14.19"/>
    </reaction>
</comment>
<comment type="catalytic activity">
    <reaction evidence="2">
        <text>17alpha-hydroxyprogesterone + reduced [NADPH--hemoprotein reductase] + O2 = androst-4-ene-3,17-dione + acetate + oxidized [NADPH--hemoprotein reductase] + H2O + 2 H(+)</text>
        <dbReference type="Rhea" id="RHEA:14753"/>
        <dbReference type="Rhea" id="RHEA-COMP:11964"/>
        <dbReference type="Rhea" id="RHEA-COMP:11965"/>
        <dbReference type="ChEBI" id="CHEBI:15377"/>
        <dbReference type="ChEBI" id="CHEBI:15378"/>
        <dbReference type="ChEBI" id="CHEBI:15379"/>
        <dbReference type="ChEBI" id="CHEBI:16422"/>
        <dbReference type="ChEBI" id="CHEBI:17252"/>
        <dbReference type="ChEBI" id="CHEBI:30089"/>
        <dbReference type="ChEBI" id="CHEBI:57618"/>
        <dbReference type="ChEBI" id="CHEBI:58210"/>
        <dbReference type="EC" id="1.14.14.32"/>
    </reaction>
</comment>
<comment type="catalytic activity">
    <reaction evidence="2">
        <text>17alpha-hydroxypregnenolone + reduced [NADPH--hemoprotein reductase] + O2 = 3beta-hydroxyandrost-5-en-17-one + acetate + oxidized [NADPH--hemoprotein reductase] + H2O + 2 H(+)</text>
        <dbReference type="Rhea" id="RHEA:50244"/>
        <dbReference type="Rhea" id="RHEA-COMP:11964"/>
        <dbReference type="Rhea" id="RHEA-COMP:11965"/>
        <dbReference type="ChEBI" id="CHEBI:15377"/>
        <dbReference type="ChEBI" id="CHEBI:15378"/>
        <dbReference type="ChEBI" id="CHEBI:15379"/>
        <dbReference type="ChEBI" id="CHEBI:28689"/>
        <dbReference type="ChEBI" id="CHEBI:28750"/>
        <dbReference type="ChEBI" id="CHEBI:30089"/>
        <dbReference type="ChEBI" id="CHEBI:57618"/>
        <dbReference type="ChEBI" id="CHEBI:58210"/>
        <dbReference type="EC" id="1.14.14.32"/>
    </reaction>
</comment>
<comment type="cofactor">
    <cofactor evidence="1">
        <name>heme</name>
        <dbReference type="ChEBI" id="CHEBI:30413"/>
    </cofactor>
</comment>
<comment type="pathway">
    <text>Lipid metabolism; steroid biosynthesis.</text>
</comment>
<comment type="subcellular location">
    <subcellularLocation>
        <location evidence="3">Membrane</location>
    </subcellularLocation>
</comment>
<comment type="similarity">
    <text evidence="3">Belongs to the cytochrome P450 family.</text>
</comment>
<feature type="chain" id="PRO_0000051947" description="Steroid 17-alpha-hydroxylase/17,20 lyase">
    <location>
        <begin position="1"/>
        <end position="509"/>
    </location>
</feature>
<feature type="binding site" description="axial binding residue" evidence="1">
    <location>
        <position position="445"/>
    </location>
    <ligand>
        <name>heme</name>
        <dbReference type="ChEBI" id="CHEBI:30413"/>
    </ligand>
    <ligandPart>
        <name>Fe</name>
        <dbReference type="ChEBI" id="CHEBI:18248"/>
    </ligandPart>
</feature>
<evidence type="ECO:0000250" key="1"/>
<evidence type="ECO:0000250" key="2">
    <source>
        <dbReference type="UniProtKB" id="P05093"/>
    </source>
</evidence>
<evidence type="ECO:0000305" key="3"/>
<protein>
    <recommendedName>
        <fullName>Steroid 17-alpha-hydroxylase/17,20 lyase</fullName>
        <ecNumber evidence="2">1.14.14.19</ecNumber>
        <ecNumber evidence="2">1.14.14.32</ecNumber>
    </recommendedName>
    <alternativeName>
        <fullName>17-alpha-hydroxyprogesterone aldolase</fullName>
    </alternativeName>
    <alternativeName>
        <fullName>CYPXVII</fullName>
    </alternativeName>
    <alternativeName>
        <fullName>Cytochrome P450 17A1</fullName>
    </alternativeName>
    <alternativeName>
        <fullName>Cytochrome P450-C17</fullName>
        <shortName>Cytochrome P450c17</shortName>
    </alternativeName>
</protein>
<gene>
    <name type="primary">CYP17A1</name>
    <name type="synonym">CYP17</name>
</gene>
<dbReference type="EC" id="1.14.14.19" evidence="2"/>
<dbReference type="EC" id="1.14.14.32" evidence="2"/>
<dbReference type="EMBL" id="S77384">
    <property type="protein sequence ID" value="AAB34256.1"/>
    <property type="molecule type" value="mRNA"/>
</dbReference>
<dbReference type="PIR" id="I51281">
    <property type="entry name" value="I51281"/>
</dbReference>
<dbReference type="SMR" id="Q92113"/>
<dbReference type="UniPathway" id="UPA00062"/>
<dbReference type="GO" id="GO:0016020">
    <property type="term" value="C:membrane"/>
    <property type="evidence" value="ECO:0007669"/>
    <property type="project" value="UniProtKB-SubCell"/>
</dbReference>
<dbReference type="GO" id="GO:0020037">
    <property type="term" value="F:heme binding"/>
    <property type="evidence" value="ECO:0007669"/>
    <property type="project" value="InterPro"/>
</dbReference>
<dbReference type="GO" id="GO:0005506">
    <property type="term" value="F:iron ion binding"/>
    <property type="evidence" value="ECO:0007669"/>
    <property type="project" value="InterPro"/>
</dbReference>
<dbReference type="GO" id="GO:0016829">
    <property type="term" value="F:lyase activity"/>
    <property type="evidence" value="ECO:0007669"/>
    <property type="project" value="UniProtKB-KW"/>
</dbReference>
<dbReference type="GO" id="GO:0004508">
    <property type="term" value="F:steroid 17-alpha-monooxygenase activity"/>
    <property type="evidence" value="ECO:0007669"/>
    <property type="project" value="UniProtKB-EC"/>
</dbReference>
<dbReference type="GO" id="GO:0042446">
    <property type="term" value="P:hormone biosynthetic process"/>
    <property type="evidence" value="ECO:0007669"/>
    <property type="project" value="TreeGrafter"/>
</dbReference>
<dbReference type="GO" id="GO:0042448">
    <property type="term" value="P:progesterone metabolic process"/>
    <property type="evidence" value="ECO:0007669"/>
    <property type="project" value="TreeGrafter"/>
</dbReference>
<dbReference type="GO" id="GO:0006694">
    <property type="term" value="P:steroid biosynthetic process"/>
    <property type="evidence" value="ECO:0007669"/>
    <property type="project" value="UniProtKB-UniPathway"/>
</dbReference>
<dbReference type="CDD" id="cd20673">
    <property type="entry name" value="CYP17A1"/>
    <property type="match status" value="1"/>
</dbReference>
<dbReference type="FunFam" id="1.10.630.10:FF:000002">
    <property type="entry name" value="Cytochrome P450 1A1"/>
    <property type="match status" value="1"/>
</dbReference>
<dbReference type="Gene3D" id="1.10.630.10">
    <property type="entry name" value="Cytochrome P450"/>
    <property type="match status" value="1"/>
</dbReference>
<dbReference type="InterPro" id="IPR001128">
    <property type="entry name" value="Cyt_P450"/>
</dbReference>
<dbReference type="InterPro" id="IPR017972">
    <property type="entry name" value="Cyt_P450_CS"/>
</dbReference>
<dbReference type="InterPro" id="IPR002401">
    <property type="entry name" value="Cyt_P450_E_grp-I"/>
</dbReference>
<dbReference type="InterPro" id="IPR036396">
    <property type="entry name" value="Cyt_P450_sf"/>
</dbReference>
<dbReference type="PANTHER" id="PTHR24289:SF14">
    <property type="entry name" value="CYTOCHROME P450, FAMILY 17, SUBFAMILY A, POLYPEPTIDE 1"/>
    <property type="match status" value="1"/>
</dbReference>
<dbReference type="PANTHER" id="PTHR24289">
    <property type="entry name" value="STEROID 17-ALPHA-HYDROXYLASE/17,20 LYASE"/>
    <property type="match status" value="1"/>
</dbReference>
<dbReference type="Pfam" id="PF00067">
    <property type="entry name" value="p450"/>
    <property type="match status" value="1"/>
</dbReference>
<dbReference type="PRINTS" id="PR00463">
    <property type="entry name" value="EP450I"/>
</dbReference>
<dbReference type="PRINTS" id="PR00385">
    <property type="entry name" value="P450"/>
</dbReference>
<dbReference type="SUPFAM" id="SSF48264">
    <property type="entry name" value="Cytochrome P450"/>
    <property type="match status" value="1"/>
</dbReference>
<dbReference type="PROSITE" id="PS00086">
    <property type="entry name" value="CYTOCHROME_P450"/>
    <property type="match status" value="1"/>
</dbReference>
<name>CP17A_SQUAC</name>
<sequence length="509" mass="57208">MSLMLAALILTVAFVICSLTGFTQRKLSGGRLPKCLPSFPLIGSLLSLRSDLPPHLLFQKLQKTYGNLFSLMMGPHYAVVINNHQHAKEVLLKKGKIFAGRPSMVTTDLLSRGGKDIAFGKYGPAWKFHRKLVLSALHLFGDGSAGIEKMICQEATSMCSTFERLNNAAHDMMPDVTRAVTNVICLLCFNSTYEKEDPEFQTMRKYSQGIVNTVAKDSLIDIFPWLQFFPNENLHTLKQCIATRDSILQKKFEDHKANYSSDSANDLFNILLKAKMNAENNNSSVHEAGLTDDHMVMTVADIFGAGVETSSTAFAWMIIYLIHHPEVQKKIQEEIDSNIGFERTPKMSDKGNMNFLNATIHEILRIQPVSPLLIPHVALADSSIGDYTIPKGTRVIINLWAIHHDEKEWKNPDAFDPGRFLDEDGKYVCSSSESYLPFGAGTRVCLGEMLARMELFLFTSWILQRFTVQVPPGYPPPDKEGKFGIVLQPLKFKVQLKLRKAWENRGLHD</sequence>
<reference key="1">
    <citation type="journal article" date="1995" name="J. Exp. Zool.">
        <title>Isolation and characterization of the cDNA encoding the spiny dogfish shark (Squalus acanthias) form of cytochrome P450c17.</title>
        <authorList>
            <person name="Trant J.M."/>
        </authorList>
    </citation>
    <scope>NUCLEOTIDE SEQUENCE [MRNA]</scope>
</reference>
<accession>Q92113</accession>
<proteinExistence type="evidence at transcript level"/>
<organism>
    <name type="scientific">Squalus acanthias</name>
    <name type="common">Spiny dogfish</name>
    <dbReference type="NCBI Taxonomy" id="7797"/>
    <lineage>
        <taxon>Eukaryota</taxon>
        <taxon>Metazoa</taxon>
        <taxon>Chordata</taxon>
        <taxon>Craniata</taxon>
        <taxon>Vertebrata</taxon>
        <taxon>Chondrichthyes</taxon>
        <taxon>Elasmobranchii</taxon>
        <taxon>Squalomorphii</taxon>
        <taxon>Squaliformes</taxon>
        <taxon>Squalidae</taxon>
        <taxon>Squalus</taxon>
    </lineage>
</organism>